<keyword id="KW-0091">Biomineralization</keyword>
<keyword id="KW-0130">Cell adhesion</keyword>
<keyword id="KW-0202">Cytokine</keyword>
<keyword id="KW-0903">Direct protein sequencing</keyword>
<keyword id="KW-0325">Glycoprotein</keyword>
<keyword id="KW-0597">Phosphoprotein</keyword>
<keyword id="KW-0654">Proteoglycan</keyword>
<keyword id="KW-1185">Reference proteome</keyword>
<keyword id="KW-0964">Secreted</keyword>
<keyword id="KW-0730">Sialic acid</keyword>
<keyword id="KW-0732">Signal</keyword>
<reference key="1">
    <citation type="journal article" date="1989" name="J. Biol. Chem.">
        <title>Osteopontin, a transformation-associated cell adhesion phosphoprotein, is induced by 12-O-tetradecanoylphorbol 13-acetate in mouse epidermis.</title>
        <authorList>
            <person name="Craig A.M."/>
            <person name="Smith J.H."/>
            <person name="Denhardt D.T."/>
        </authorList>
    </citation>
    <scope>NUCLEOTIDE SEQUENCE [MRNA]</scope>
</reference>
<reference key="2">
    <citation type="journal article" date="1989" name="J. Exp. Med.">
        <title>Structural and functional studies of the early T lymphocyte activation 1 (Eta-1) gene. Definition of a novel T cell-dependent response associated with genetic resistance to bacterial infection.</title>
        <authorList>
            <person name="Patarca R."/>
            <person name="Freeman G.J."/>
            <person name="Singh R.P."/>
            <person name="Wei F.-Y."/>
            <person name="Durfee T."/>
            <person name="Blattner F."/>
            <person name="Regnier D.C."/>
            <person name="Kozak C.A."/>
            <person name="Mock B.A."/>
            <person name="Morse H.C. III"/>
            <person name="Jerrells T.R."/>
            <person name="Cantor H."/>
        </authorList>
    </citation>
    <scope>NUCLEOTIDE SEQUENCE [MRNA]</scope>
</reference>
<reference key="3">
    <citation type="journal article" date="1989" name="Nucleic Acids Res.">
        <title>Nucleotide sequence of cDNA for mouse osteopontin-like protein.</title>
        <authorList>
            <person name="Miyazaki Y."/>
            <person name="Setoguchi M."/>
            <person name="Yoshida S."/>
            <person name="Higuchi Y."/>
            <person name="Akizuki S."/>
            <person name="Yamamoto S."/>
        </authorList>
    </citation>
    <scope>NUCLEOTIDE SEQUENCE [MRNA]</scope>
    <source>
        <tissue>Macrophage</tissue>
    </source>
</reference>
<reference key="4">
    <citation type="journal article" date="1990" name="J. Biol. Chem.">
        <title>The mouse osteopontin gene. Expression in monocytic lineages and complete nucleotide sequence.</title>
        <authorList>
            <person name="Miyazaki Y."/>
            <person name="Setoguchi M."/>
            <person name="Yoshida S.Y."/>
            <person name="Akizuki S."/>
            <person name="Yamamoto S."/>
        </authorList>
    </citation>
    <scope>NUCLEOTIDE SEQUENCE [GENOMIC DNA]</scope>
    <source>
        <strain>BALB/cJ</strain>
        <tissue>Liver</tissue>
    </source>
</reference>
<reference key="5">
    <citation type="journal article" date="2004" name="Genome Res.">
        <title>The status, quality, and expansion of the NIH full-length cDNA project: the Mammalian Gene Collection (MGC).</title>
        <authorList>
            <consortium name="The MGC Project Team"/>
        </authorList>
    </citation>
    <scope>NUCLEOTIDE SEQUENCE [LARGE SCALE MRNA]</scope>
    <source>
        <strain>NMRI</strain>
        <tissue>Mammary gland</tissue>
    </source>
</reference>
<reference key="6">
    <citation type="journal article" date="1992" name="J. Bone Miner. Res.">
        <title>The calcium oxalate crystal growth inhibitor protein produced by mouse kidney cortical cells in culture is osteopontin.</title>
        <authorList>
            <person name="Worcester E.M."/>
            <person name="Blumenthal S.S."/>
            <person name="Beshensky A.M."/>
            <person name="Lewand D.L."/>
        </authorList>
    </citation>
    <scope>PROTEIN SEQUENCE OF 17-37</scope>
    <source>
        <tissue>Kidney</tissue>
    </source>
</reference>
<reference key="7">
    <citation type="journal article" date="1990" name="J. Exp. Med.">
        <title>Definition of a specific interaction between the early T lymphocyte activation 1 (Eta-1) protein and murine macrophages in vitro and its effect upon macrophages in vivo.</title>
        <authorList>
            <person name="Singh R.P."/>
            <person name="Patarca R."/>
            <person name="Schwartz J."/>
            <person name="Singh P."/>
            <person name="Cantor H."/>
        </authorList>
    </citation>
    <scope>PROTEIN SEQUENCE OF 158-176</scope>
    <scope>FUNCTION</scope>
</reference>
<reference key="8">
    <citation type="journal article" date="2000" name="Science">
        <title>Eta-1 (osteopontin): an early component of type-1 (cell-mediated) immunity.</title>
        <authorList>
            <person name="Ashkar S."/>
            <person name="Weber G.F."/>
            <person name="Panoutsakopoulou V."/>
            <person name="Sanchirico M.E."/>
            <person name="Jansson M."/>
            <person name="Zawaideh S."/>
            <person name="Rittling S.R."/>
            <person name="Denhardt D.T."/>
            <person name="Glimcher M.J."/>
            <person name="Cantor H."/>
        </authorList>
    </citation>
    <scope>FUNCTION</scope>
</reference>
<reference key="9">
    <citation type="journal article" date="2007" name="Proc. Natl. Acad. Sci. U.S.A.">
        <title>Large-scale phosphorylation analysis of mouse liver.</title>
        <authorList>
            <person name="Villen J."/>
            <person name="Beausoleil S.A."/>
            <person name="Gerber S.A."/>
            <person name="Gygi S.P."/>
        </authorList>
    </citation>
    <scope>PHOSPHORYLATION [LARGE SCALE ANALYSIS] AT SER-283; SER-288 AND SER-290</scope>
    <scope>IDENTIFICATION BY MASS SPECTROMETRY [LARGE SCALE ANALYSIS]</scope>
    <source>
        <tissue>Liver</tissue>
    </source>
</reference>
<reference key="10">
    <citation type="journal article" date="2009" name="Immunity">
        <title>The phagosomal proteome in interferon-gamma-activated macrophages.</title>
        <authorList>
            <person name="Trost M."/>
            <person name="English L."/>
            <person name="Lemieux S."/>
            <person name="Courcelles M."/>
            <person name="Desjardins M."/>
            <person name="Thibault P."/>
        </authorList>
    </citation>
    <scope>PHOSPHORYLATION [LARGE SCALE ANALYSIS] AT SER-283 AND SER-290</scope>
    <scope>IDENTIFICATION BY MASS SPECTROMETRY [LARGE SCALE ANALYSIS]</scope>
</reference>
<reference key="11">
    <citation type="journal article" date="2010" name="Cell">
        <title>A tissue-specific atlas of mouse protein phosphorylation and expression.</title>
        <authorList>
            <person name="Huttlin E.L."/>
            <person name="Jedrychowski M.P."/>
            <person name="Elias J.E."/>
            <person name="Goswami T."/>
            <person name="Rad R."/>
            <person name="Beausoleil S.A."/>
            <person name="Villen J."/>
            <person name="Haas W."/>
            <person name="Sowa M.E."/>
            <person name="Gygi S.P."/>
        </authorList>
    </citation>
    <scope>PHOSPHORYLATION [LARGE SCALE ANALYSIS] AT SER-26; SER-228; SER-231; SER-234; SER-283; SER-288 AND SER-290</scope>
    <scope>IDENTIFICATION BY MASS SPECTROMETRY [LARGE SCALE ANALYSIS]</scope>
    <source>
        <tissue>Brain</tissue>
        <tissue>Kidney</tissue>
        <tissue>Pancreas</tissue>
    </source>
</reference>
<reference key="12">
    <citation type="journal article" date="2012" name="J. Biol. Chem.">
        <title>Polydom/SVEP1 is a ligand for integrin alpha9beta1.</title>
        <authorList>
            <person name="Sato-Nishiuchi R."/>
            <person name="Nakano I."/>
            <person name="Ozawa A."/>
            <person name="Sato Y."/>
            <person name="Takeichi M."/>
            <person name="Kiyozumi D."/>
            <person name="Yamazaki K."/>
            <person name="Yasunaga T."/>
            <person name="Futaki S."/>
            <person name="Sekiguchi K."/>
        </authorList>
    </citation>
    <scope>INTERACTION WITH ITGA9:ITGB1</scope>
</reference>
<reference key="13">
    <citation type="journal article" date="2013" name="J. Bone Miner. Res.">
        <title>In vivo overexpression of tissue-nonspecific alkaline phosphatase increases skeletal mineralization and affects the phosphorylation status of osteopontin.</title>
        <authorList>
            <person name="Narisawa S."/>
            <person name="Yadav M.C."/>
            <person name="Millan J.L."/>
        </authorList>
    </citation>
    <scope>DEPHOSPHORYLATION</scope>
</reference>
<accession>P10923</accession>
<accession>P19008</accession>
<accession>Q91VH4</accession>
<organism>
    <name type="scientific">Mus musculus</name>
    <name type="common">Mouse</name>
    <dbReference type="NCBI Taxonomy" id="10090"/>
    <lineage>
        <taxon>Eukaryota</taxon>
        <taxon>Metazoa</taxon>
        <taxon>Chordata</taxon>
        <taxon>Craniata</taxon>
        <taxon>Vertebrata</taxon>
        <taxon>Euteleostomi</taxon>
        <taxon>Mammalia</taxon>
        <taxon>Eutheria</taxon>
        <taxon>Euarchontoglires</taxon>
        <taxon>Glires</taxon>
        <taxon>Rodentia</taxon>
        <taxon>Myomorpha</taxon>
        <taxon>Muroidea</taxon>
        <taxon>Muridae</taxon>
        <taxon>Murinae</taxon>
        <taxon>Mus</taxon>
        <taxon>Mus</taxon>
    </lineage>
</organism>
<evidence type="ECO:0000250" key="1"/>
<evidence type="ECO:0000250" key="2">
    <source>
        <dbReference type="UniProtKB" id="P10451"/>
    </source>
</evidence>
<evidence type="ECO:0000250" key="3">
    <source>
        <dbReference type="UniProtKB" id="P31096"/>
    </source>
</evidence>
<evidence type="ECO:0000255" key="4"/>
<evidence type="ECO:0000256" key="5">
    <source>
        <dbReference type="SAM" id="MobiDB-lite"/>
    </source>
</evidence>
<evidence type="ECO:0000269" key="6">
    <source>
    </source>
</evidence>
<evidence type="ECO:0000269" key="7">
    <source>
    </source>
</evidence>
<evidence type="ECO:0000269" key="8">
    <source>
    </source>
</evidence>
<evidence type="ECO:0000269" key="9">
    <source>
    </source>
</evidence>
<evidence type="ECO:0000305" key="10"/>
<evidence type="ECO:0007744" key="11">
    <source>
    </source>
</evidence>
<evidence type="ECO:0007744" key="12">
    <source>
    </source>
</evidence>
<evidence type="ECO:0007744" key="13">
    <source>
    </source>
</evidence>
<proteinExistence type="evidence at protein level"/>
<dbReference type="EMBL" id="J04806">
    <property type="protein sequence ID" value="AAA57265.1"/>
    <property type="molecule type" value="mRNA"/>
</dbReference>
<dbReference type="EMBL" id="X16151">
    <property type="protein sequence ID" value="CAA34276.1"/>
    <property type="molecule type" value="mRNA"/>
</dbReference>
<dbReference type="EMBL" id="X13986">
    <property type="protein sequence ID" value="CAA32165.1"/>
    <property type="molecule type" value="mRNA"/>
</dbReference>
<dbReference type="EMBL" id="X51834">
    <property type="protein sequence ID" value="CAA36132.1"/>
    <property type="molecule type" value="Genomic_DNA"/>
</dbReference>
<dbReference type="EMBL" id="BC014284">
    <property type="protein sequence ID" value="AAH14284.1"/>
    <property type="status" value="ALT_INIT"/>
    <property type="molecule type" value="mRNA"/>
</dbReference>
<dbReference type="EMBL" id="BC057858">
    <property type="protein sequence ID" value="AAH57858.1"/>
    <property type="molecule type" value="mRNA"/>
</dbReference>
<dbReference type="CCDS" id="CCDS19486.1"/>
<dbReference type="PIR" id="A37818">
    <property type="entry name" value="A37818"/>
</dbReference>
<dbReference type="RefSeq" id="NP_001191162.1">
    <property type="nucleotide sequence ID" value="NM_001204233.1"/>
</dbReference>
<dbReference type="RefSeq" id="NP_033289.2">
    <property type="nucleotide sequence ID" value="NM_009263.3"/>
</dbReference>
<dbReference type="BioGRID" id="203467">
    <property type="interactions" value="19"/>
</dbReference>
<dbReference type="FunCoup" id="P10923">
    <property type="interactions" value="491"/>
</dbReference>
<dbReference type="IntAct" id="P10923">
    <property type="interactions" value="1"/>
</dbReference>
<dbReference type="STRING" id="10090.ENSMUSP00000084043"/>
<dbReference type="GlyCosmos" id="P10923">
    <property type="glycosylation" value="3 sites, No reported glycans"/>
</dbReference>
<dbReference type="GlyGen" id="P10923">
    <property type="glycosylation" value="5 sites"/>
</dbReference>
<dbReference type="iPTMnet" id="P10923"/>
<dbReference type="PhosphoSitePlus" id="P10923"/>
<dbReference type="CPTAC" id="non-CPTAC-3592"/>
<dbReference type="jPOST" id="P10923"/>
<dbReference type="PaxDb" id="10090-ENSMUSP00000108367"/>
<dbReference type="PeptideAtlas" id="P10923"/>
<dbReference type="ProteomicsDB" id="294082"/>
<dbReference type="Pumba" id="P10923"/>
<dbReference type="ABCD" id="P10923">
    <property type="antibodies" value="7 sequenced antibodies"/>
</dbReference>
<dbReference type="Antibodypedia" id="3695">
    <property type="antibodies" value="1570 antibodies from 50 providers"/>
</dbReference>
<dbReference type="DNASU" id="20750"/>
<dbReference type="Ensembl" id="ENSMUST00000031243.15">
    <property type="protein sequence ID" value="ENSMUSP00000031243.9"/>
    <property type="gene ID" value="ENSMUSG00000029304.15"/>
</dbReference>
<dbReference type="Ensembl" id="ENSMUST00000112747.2">
    <property type="protein sequence ID" value="ENSMUSP00000108367.2"/>
    <property type="gene ID" value="ENSMUSG00000029304.15"/>
</dbReference>
<dbReference type="Ensembl" id="ENSMUST00000112748.8">
    <property type="protein sequence ID" value="ENSMUSP00000108368.2"/>
    <property type="gene ID" value="ENSMUSG00000029304.15"/>
</dbReference>
<dbReference type="GeneID" id="20750"/>
<dbReference type="KEGG" id="mmu:20750"/>
<dbReference type="UCSC" id="uc008yki.2">
    <property type="organism name" value="mouse"/>
</dbReference>
<dbReference type="AGR" id="MGI:98389"/>
<dbReference type="CTD" id="6696"/>
<dbReference type="MGI" id="MGI:98389">
    <property type="gene designation" value="Spp1"/>
</dbReference>
<dbReference type="VEuPathDB" id="HostDB:ENSMUSG00000029304"/>
<dbReference type="eggNOG" id="ENOG502S5R4">
    <property type="taxonomic scope" value="Eukaryota"/>
</dbReference>
<dbReference type="GeneTree" id="ENSGT00390000002509"/>
<dbReference type="HOGENOM" id="CLU_953033_0_0_1"/>
<dbReference type="InParanoid" id="P10923"/>
<dbReference type="OrthoDB" id="9047304at2759"/>
<dbReference type="PhylomeDB" id="P10923"/>
<dbReference type="TreeFam" id="TF350201"/>
<dbReference type="Reactome" id="R-MMU-1474228">
    <property type="pathway name" value="Degradation of the extracellular matrix"/>
</dbReference>
<dbReference type="Reactome" id="R-MMU-186797">
    <property type="pathway name" value="Signaling by PDGF"/>
</dbReference>
<dbReference type="Reactome" id="R-MMU-216083">
    <property type="pathway name" value="Integrin cell surface interactions"/>
</dbReference>
<dbReference type="Reactome" id="R-MMU-381426">
    <property type="pathway name" value="Regulation of Insulin-like Growth Factor (IGF) transport and uptake by Insulin-like Growth Factor Binding Proteins (IGFBPs)"/>
</dbReference>
<dbReference type="Reactome" id="R-MMU-8957275">
    <property type="pathway name" value="Post-translational protein phosphorylation"/>
</dbReference>
<dbReference type="BioGRID-ORCS" id="20750">
    <property type="hits" value="3 hits in 80 CRISPR screens"/>
</dbReference>
<dbReference type="ChiTaRS" id="Spp1">
    <property type="organism name" value="mouse"/>
</dbReference>
<dbReference type="PRO" id="PR:P10923"/>
<dbReference type="Proteomes" id="UP000000589">
    <property type="component" value="Chromosome 5"/>
</dbReference>
<dbReference type="RNAct" id="P10923">
    <property type="molecule type" value="protein"/>
</dbReference>
<dbReference type="Bgee" id="ENSMUSG00000029304">
    <property type="expression patterns" value="Expressed in vault of skull and 259 other cell types or tissues"/>
</dbReference>
<dbReference type="ExpressionAtlas" id="P10923">
    <property type="expression patterns" value="baseline and differential"/>
</dbReference>
<dbReference type="GO" id="GO:0045177">
    <property type="term" value="C:apical part of cell"/>
    <property type="evidence" value="ECO:0000314"/>
    <property type="project" value="MGI"/>
</dbReference>
<dbReference type="GO" id="GO:0005737">
    <property type="term" value="C:cytoplasm"/>
    <property type="evidence" value="ECO:0000314"/>
    <property type="project" value="MGI"/>
</dbReference>
<dbReference type="GO" id="GO:0005576">
    <property type="term" value="C:extracellular region"/>
    <property type="evidence" value="ECO:0000303"/>
    <property type="project" value="UniProtKB"/>
</dbReference>
<dbReference type="GO" id="GO:0005615">
    <property type="term" value="C:extracellular space"/>
    <property type="evidence" value="ECO:0007669"/>
    <property type="project" value="UniProtKB-KW"/>
</dbReference>
<dbReference type="GO" id="GO:0005125">
    <property type="term" value="F:cytokine activity"/>
    <property type="evidence" value="ECO:0000303"/>
    <property type="project" value="UniProtKB"/>
</dbReference>
<dbReference type="GO" id="GO:0050840">
    <property type="term" value="F:extracellular matrix binding"/>
    <property type="evidence" value="ECO:0000314"/>
    <property type="project" value="MGI"/>
</dbReference>
<dbReference type="GO" id="GO:0005178">
    <property type="term" value="F:integrin binding"/>
    <property type="evidence" value="ECO:0000314"/>
    <property type="project" value="UniProtKB"/>
</dbReference>
<dbReference type="GO" id="GO:0030282">
    <property type="term" value="P:bone mineralization"/>
    <property type="evidence" value="ECO:0000314"/>
    <property type="project" value="MGI"/>
</dbReference>
<dbReference type="GO" id="GO:0055074">
    <property type="term" value="P:calcium ion homeostasis"/>
    <property type="evidence" value="ECO:0000314"/>
    <property type="project" value="MGI"/>
</dbReference>
<dbReference type="GO" id="GO:0007155">
    <property type="term" value="P:cell adhesion"/>
    <property type="evidence" value="ECO:0007669"/>
    <property type="project" value="UniProtKB-KW"/>
</dbReference>
<dbReference type="GO" id="GO:0071498">
    <property type="term" value="P:cellular response to fluid shear stress"/>
    <property type="evidence" value="ECO:0000314"/>
    <property type="project" value="MGI"/>
</dbReference>
<dbReference type="GO" id="GO:1990830">
    <property type="term" value="P:cellular response to leukemia inhibitory factor"/>
    <property type="evidence" value="ECO:0000270"/>
    <property type="project" value="MGI"/>
</dbReference>
<dbReference type="GO" id="GO:0072044">
    <property type="term" value="P:collecting duct development"/>
    <property type="evidence" value="ECO:0000315"/>
    <property type="project" value="MGI"/>
</dbReference>
<dbReference type="GO" id="GO:0006874">
    <property type="term" value="P:intracellular calcium ion homeostasis"/>
    <property type="evidence" value="ECO:0000315"/>
    <property type="project" value="MGI"/>
</dbReference>
<dbReference type="GO" id="GO:0030644">
    <property type="term" value="P:intracellular chloride ion homeostasis"/>
    <property type="evidence" value="ECO:0000315"/>
    <property type="project" value="MGI"/>
</dbReference>
<dbReference type="GO" id="GO:0030643">
    <property type="term" value="P:intracellular phosphate ion homeostasis"/>
    <property type="evidence" value="ECO:0000315"/>
    <property type="project" value="MGI"/>
</dbReference>
<dbReference type="GO" id="GO:0006883">
    <property type="term" value="P:intracellular sodium ion homeostasis"/>
    <property type="evidence" value="ECO:0000315"/>
    <property type="project" value="MGI"/>
</dbReference>
<dbReference type="GO" id="GO:0043066">
    <property type="term" value="P:negative regulation of apoptotic process"/>
    <property type="evidence" value="ECO:0000303"/>
    <property type="project" value="UniProtKB"/>
</dbReference>
<dbReference type="GO" id="GO:0030593">
    <property type="term" value="P:neutrophil chemotaxis"/>
    <property type="evidence" value="ECO:0000314"/>
    <property type="project" value="MGI"/>
</dbReference>
<dbReference type="GO" id="GO:0010811">
    <property type="term" value="P:positive regulation of cell-substrate adhesion"/>
    <property type="evidence" value="ECO:0000314"/>
    <property type="project" value="MGI"/>
</dbReference>
<dbReference type="GO" id="GO:0034418">
    <property type="term" value="P:urate biosynthetic process"/>
    <property type="evidence" value="ECO:0000315"/>
    <property type="project" value="MGI"/>
</dbReference>
<dbReference type="DisProt" id="DP01448"/>
<dbReference type="InterPro" id="IPR002038">
    <property type="entry name" value="Osteopontin"/>
</dbReference>
<dbReference type="InterPro" id="IPR019841">
    <property type="entry name" value="Osteopontin_CS"/>
</dbReference>
<dbReference type="PANTHER" id="PTHR10607">
    <property type="entry name" value="OSTEOPONTIN"/>
    <property type="match status" value="1"/>
</dbReference>
<dbReference type="PANTHER" id="PTHR10607:SF1">
    <property type="entry name" value="OSTEOPONTIN"/>
    <property type="match status" value="1"/>
</dbReference>
<dbReference type="Pfam" id="PF00865">
    <property type="entry name" value="Osteopontin"/>
    <property type="match status" value="1"/>
</dbReference>
<dbReference type="PRINTS" id="PR00216">
    <property type="entry name" value="OSTEOPONTIN"/>
</dbReference>
<dbReference type="SMART" id="SM00017">
    <property type="entry name" value="OSTEO"/>
    <property type="match status" value="1"/>
</dbReference>
<dbReference type="PROSITE" id="PS00884">
    <property type="entry name" value="OSTEOPONTIN"/>
    <property type="match status" value="1"/>
</dbReference>
<protein>
    <recommendedName>
        <fullName>Osteopontin</fullName>
    </recommendedName>
    <alternativeName>
        <fullName>2AR</fullName>
    </alternativeName>
    <alternativeName>
        <fullName>Bone sialoprotein 1</fullName>
    </alternativeName>
    <alternativeName>
        <fullName>Calcium oxalate crystal growth inhibitor protein</fullName>
    </alternativeName>
    <alternativeName>
        <fullName>Early T-lymphocyte activation 1 protein</fullName>
    </alternativeName>
    <alternativeName>
        <fullName>Minopontin</fullName>
    </alternativeName>
    <alternativeName>
        <fullName>Secreted phosphoprotein 1</fullName>
        <shortName>SPP-1</shortName>
    </alternativeName>
</protein>
<feature type="signal peptide" evidence="4">
    <location>
        <begin position="1"/>
        <end position="16"/>
    </location>
</feature>
<feature type="chain" id="PRO_0000020322" description="Osteopontin">
    <location>
        <begin position="17"/>
        <end position="294"/>
    </location>
</feature>
<feature type="region of interest" description="Disordered" evidence="5">
    <location>
        <begin position="42"/>
        <end position="274"/>
    </location>
</feature>
<feature type="short sequence motif" description="Cell attachment site">
    <location>
        <begin position="144"/>
        <end position="146"/>
    </location>
</feature>
<feature type="compositionally biased region" description="Polar residues" evidence="5">
    <location>
        <begin position="48"/>
        <end position="61"/>
    </location>
</feature>
<feature type="compositionally biased region" description="Acidic residues" evidence="5">
    <location>
        <begin position="85"/>
        <end position="110"/>
    </location>
</feature>
<feature type="compositionally biased region" description="Polar residues" evidence="5">
    <location>
        <begin position="121"/>
        <end position="130"/>
    </location>
</feature>
<feature type="compositionally biased region" description="Basic and acidic residues" evidence="5">
    <location>
        <begin position="174"/>
        <end position="187"/>
    </location>
</feature>
<feature type="compositionally biased region" description="Polar residues" evidence="5">
    <location>
        <begin position="197"/>
        <end position="216"/>
    </location>
</feature>
<feature type="compositionally biased region" description="Basic and acidic residues" evidence="5">
    <location>
        <begin position="220"/>
        <end position="232"/>
    </location>
</feature>
<feature type="compositionally biased region" description="Polar residues" evidence="5">
    <location>
        <begin position="234"/>
        <end position="249"/>
    </location>
</feature>
<feature type="compositionally biased region" description="Basic and acidic residues" evidence="5">
    <location>
        <begin position="263"/>
        <end position="274"/>
    </location>
</feature>
<feature type="modified residue" description="Phosphoserine" evidence="3">
    <location>
        <position position="24"/>
    </location>
</feature>
<feature type="modified residue" description="Phosphoserine" evidence="13">
    <location>
        <position position="26"/>
    </location>
</feature>
<feature type="modified residue" description="Phosphoserine" evidence="2">
    <location>
        <position position="27"/>
    </location>
</feature>
<feature type="modified residue" description="Phosphoserine" evidence="2">
    <location>
        <position position="61"/>
    </location>
</feature>
<feature type="modified residue" description="Phosphoserine" evidence="2">
    <location>
        <position position="62"/>
    </location>
</feature>
<feature type="modified residue" description="Phosphoserine" evidence="3">
    <location>
        <position position="75"/>
    </location>
</feature>
<feature type="modified residue" description="Phosphoserine" evidence="3">
    <location>
        <position position="77"/>
    </location>
</feature>
<feature type="modified residue" description="Phosphoserine" evidence="3">
    <location>
        <position position="80"/>
    </location>
</feature>
<feature type="modified residue" description="Phosphoserine" evidence="2">
    <location>
        <position position="106"/>
    </location>
</feature>
<feature type="modified residue" description="Phosphoserine" evidence="3">
    <location>
        <position position="109"/>
    </location>
</feature>
<feature type="modified residue" description="Phosphoserine" evidence="2">
    <location>
        <position position="112"/>
    </location>
</feature>
<feature type="modified residue" description="Phosphoserine" evidence="3">
    <location>
        <position position="115"/>
    </location>
</feature>
<feature type="modified residue" description="Phosphoserine" evidence="3">
    <location>
        <position position="118"/>
    </location>
</feature>
<feature type="modified residue" description="Phosphothreonine" evidence="3">
    <location>
        <position position="170"/>
    </location>
</feature>
<feature type="modified residue" description="Phosphothreonine" evidence="2">
    <location>
        <position position="175"/>
    </location>
</feature>
<feature type="modified residue" description="Phosphoserine" evidence="2">
    <location>
        <position position="176"/>
    </location>
</feature>
<feature type="modified residue" description="Phosphoserine" evidence="2">
    <location>
        <position position="180"/>
    </location>
</feature>
<feature type="modified residue" description="Phosphoserine" evidence="2">
    <location>
        <position position="200"/>
    </location>
</feature>
<feature type="modified residue" description="Phosphoserine" evidence="2">
    <location>
        <position position="209"/>
    </location>
</feature>
<feature type="modified residue" description="Phosphoserine" evidence="2">
    <location>
        <position position="213"/>
    </location>
</feature>
<feature type="modified residue" description="Phosphoserine" evidence="2">
    <location>
        <position position="219"/>
    </location>
</feature>
<feature type="modified residue" description="Phosphothreonine" evidence="2">
    <location>
        <position position="222"/>
    </location>
</feature>
<feature type="modified residue" description="Phosphoserine" evidence="13">
    <location>
        <position position="228"/>
    </location>
</feature>
<feature type="modified residue" description="Phosphoserine" evidence="13">
    <location>
        <position position="231"/>
    </location>
</feature>
<feature type="modified residue" description="Phosphoserine" evidence="13">
    <location>
        <position position="234"/>
    </location>
</feature>
<feature type="modified residue" description="Phosphoserine" evidence="2">
    <location>
        <position position="238"/>
    </location>
</feature>
<feature type="modified residue" description="Phosphoserine" evidence="2">
    <location>
        <position position="243"/>
    </location>
</feature>
<feature type="modified residue" description="Phosphoserine" evidence="2">
    <location>
        <position position="247"/>
    </location>
</feature>
<feature type="modified residue" description="Phosphoserine" evidence="2">
    <location>
        <position position="250"/>
    </location>
</feature>
<feature type="modified residue" description="Phosphoserine" evidence="2">
    <location>
        <position position="255"/>
    </location>
</feature>
<feature type="modified residue" description="Phosphoserine" evidence="2">
    <location>
        <position position="260"/>
    </location>
</feature>
<feature type="modified residue" description="Phosphoserine" evidence="2">
    <location>
        <position position="271"/>
    </location>
</feature>
<feature type="modified residue" description="Phosphoserine" evidence="11 12 13">
    <location>
        <position position="283"/>
    </location>
</feature>
<feature type="modified residue" description="Phosphoserine" evidence="11 13">
    <location>
        <position position="288"/>
    </location>
</feature>
<feature type="modified residue" description="Phosphoserine" evidence="11 12 13">
    <location>
        <position position="290"/>
    </location>
</feature>
<feature type="modified residue" description="Phosphoserine" evidence="2">
    <location>
        <position position="291"/>
    </location>
</feature>
<feature type="glycosylation site" description="O-linked (GalNAc...) threonine" evidence="1">
    <location>
        <position position="123"/>
    </location>
</feature>
<feature type="glycosylation site" description="O-linked (GalNAc...) threonine" evidence="1">
    <location>
        <position position="132"/>
    </location>
</feature>
<feature type="glycosylation site" description="O-linked (GalNAc...) threonine" evidence="1">
    <location>
        <position position="137"/>
    </location>
</feature>
<feature type="glycosylation site" description="O-linked (Xyl...) (chondroitin sulfate) serine" evidence="2">
    <location>
        <position position="219"/>
    </location>
</feature>
<feature type="glycosylation site" description="O-linked (Xyl...) (chondroitin sulfate) serine" evidence="2">
    <location>
        <position position="288"/>
    </location>
</feature>
<feature type="sequence conflict" description="In Ref. 2; CAA34276." evidence="10" ref="2">
    <original>L</original>
    <variation>P</variation>
    <location>
        <position position="43"/>
    </location>
</feature>
<feature type="sequence conflict" description="In Ref. 1; AAA57265." evidence="10" ref="1">
    <original>E</original>
    <variation>G</variation>
    <location>
        <position position="99"/>
    </location>
</feature>
<feature type="sequence conflict" description="In Ref. 5; AAH14284." evidence="10" ref="5">
    <original>S</original>
    <variation>N</variation>
    <location>
        <position position="100"/>
    </location>
</feature>
<feature type="sequence conflict" description="In Ref. 3; CAA32165 and 5; AAH14284." evidence="10" ref="3 5">
    <original>V</original>
    <variation>F</variation>
    <location>
        <position position="122"/>
    </location>
</feature>
<feature type="sequence conflict" description="In Ref. 5; AAH14284." evidence="10" ref="5">
    <original>N</original>
    <variation>D</variation>
    <location>
        <position position="142"/>
    </location>
</feature>
<feature type="sequence conflict" description="In Ref. 5; AAH14284." evidence="10" ref="5">
    <original>D</original>
    <variation>Y</variation>
    <location>
        <position position="171"/>
    </location>
</feature>
<feature type="sequence conflict" description="In Ref. 5; AAH14284." evidence="10" ref="5">
    <original>D</original>
    <variation>N</variation>
    <location>
        <position position="188"/>
    </location>
</feature>
<feature type="sequence conflict" description="In Ref. 5; AAH14284." evidence="10" ref="5">
    <original>K</original>
    <variation>R</variation>
    <location>
        <position position="207"/>
    </location>
</feature>
<feature type="sequence conflict" description="In Ref. 5; AAH14284." evidence="10" ref="5">
    <original>R</original>
    <variation>S</variation>
    <location>
        <position position="224"/>
    </location>
</feature>
<feature type="sequence conflict" description="In Ref. 5; AAH14284." evidence="10" ref="5">
    <original>Q</original>
    <variation>H</variation>
    <location>
        <position position="232"/>
    </location>
</feature>
<feature type="sequence conflict" description="In Ref. 5; AAH14284." evidence="10" ref="5">
    <original>Y</original>
    <variation>H</variation>
    <location>
        <position position="277"/>
    </location>
</feature>
<name>OSTP_MOUSE</name>
<comment type="function">
    <text evidence="3">Major non-collagenous bone protein that binds tightly to hydroxyapatite. Appears to form an integral part of the mineralized matrix. Probably important to cell-matrix interaction.</text>
</comment>
<comment type="function">
    <text evidence="6 9">Acts as a cytokine involved in enhancing production of interferon-gamma and interleukin-12 and reducing production of interleukin-10 and is essential in the pathway that leads to type I immunity.</text>
</comment>
<comment type="subunit">
    <text evidence="7">Interacts (via N-terminus) with integrin ITGA9:ITGB1.</text>
</comment>
<comment type="subcellular location">
    <subcellularLocation>
        <location evidence="2">Secreted</location>
    </subcellularLocation>
</comment>
<comment type="PTM">
    <text evidence="2 8">Extensively phosphorylated by FAM20C in the extracellular medium at multiple sites within the S-x-E/pS motif (By similarity). The phosphorylated form inhibits hydroxyapatite crystallization (PubMed:23427088). Dephosphorylation via a mechanism involving ALPL/TNAP promotes hydroxyapatite crystallization (PubMed:23427088).</text>
</comment>
<comment type="PTM">
    <text evidence="2">O-glycosylated.</text>
</comment>
<comment type="PTM">
    <text evidence="3">Forms covalent cross-links mediated by transglutaminase TGM2, between a glutamine and the epsilon-amino group of a lysine residue, forming homopolymers and heteropolymers, increasing its collagen binding properties.</text>
</comment>
<comment type="similarity">
    <text evidence="10">Belongs to the osteopontin family.</text>
</comment>
<comment type="sequence caution" evidence="10">
    <conflict type="erroneous initiation">
        <sequence resource="EMBL-CDS" id="AAH14284"/>
    </conflict>
</comment>
<gene>
    <name type="primary">Spp1</name>
    <name type="synonym">Eta-1</name>
    <name type="synonym">Op</name>
    <name type="synonym">Spp-1</name>
</gene>
<sequence>MRLAVICFCLFGIASSLPVKVTDSGSSEEKLYSLHPDPIATWLVPDPSQKQNLLAPQNAVSSEEKDDFKQETLPSNSNESHDHMDDDDDDDDDDGDHAESEDSVDSDESDESHHSDESDETVTASTQADTFTPIVPTVDVPNGRGDSLAYGLRSKSRSFQVSDEQYPDATDEDLTSHMKSGESKESLDVIPVAQLLSMPSDQDNNGKGSHESSQLDEPSLETHRLEHSKESQESADQSDVIDSQASSKASLEHQSHKFHSHKDKLVLDPKSKEDDRYLKFRISHELESSSSEVN</sequence>